<evidence type="ECO:0000255" key="1">
    <source>
        <dbReference type="HAMAP-Rule" id="MF_00040"/>
    </source>
</evidence>
<sequence>MAADQKTLLDDLTRRMDGALESLRRDFAGLRSGRASPALIEPVRVEAYGGEVPLTQVGSIAVPEARMLTVQVWDRSLVGAVERAIRDSGLGLNPAADGQTVRVPIPQLTEERRGELARTAGKYSENAKIAVRGVRRDGMDQTKAQEKKGDISQDDVKVWSDAIQKLTDQYVKRIDEMLAEKEREIKQV</sequence>
<name>RRF_GLUDA</name>
<reference key="1">
    <citation type="journal article" date="2009" name="BMC Genomics">
        <title>Complete genome sequence of the sugarcane nitrogen-fixing endophyte Gluconacetobacter diazotrophicus Pal5.</title>
        <authorList>
            <person name="Bertalan M."/>
            <person name="Albano R."/>
            <person name="de Padua V."/>
            <person name="Rouws L."/>
            <person name="Rojas C."/>
            <person name="Hemerly A."/>
            <person name="Teixeira K."/>
            <person name="Schwab S."/>
            <person name="Araujo J."/>
            <person name="Oliveira A."/>
            <person name="Franca L."/>
            <person name="Magalhaes V."/>
            <person name="Alqueres S."/>
            <person name="Cardoso A."/>
            <person name="Almeida W."/>
            <person name="Loureiro M.M."/>
            <person name="Nogueira E."/>
            <person name="Cidade D."/>
            <person name="Oliveira D."/>
            <person name="Simao T."/>
            <person name="Macedo J."/>
            <person name="Valadao A."/>
            <person name="Dreschsel M."/>
            <person name="Freitas F."/>
            <person name="Vidal M."/>
            <person name="Guedes H."/>
            <person name="Rodrigues E."/>
            <person name="Meneses C."/>
            <person name="Brioso P."/>
            <person name="Pozzer L."/>
            <person name="Figueiredo D."/>
            <person name="Montano H."/>
            <person name="Junior J."/>
            <person name="de Souza Filho G."/>
            <person name="Martin Quintana Flores V."/>
            <person name="Ferreira B."/>
            <person name="Branco A."/>
            <person name="Gonzalez P."/>
            <person name="Guillobel H."/>
            <person name="Lemos M."/>
            <person name="Seibel L."/>
            <person name="Macedo J."/>
            <person name="Alves-Ferreira M."/>
            <person name="Sachetto-Martins G."/>
            <person name="Coelho A."/>
            <person name="Santos E."/>
            <person name="Amaral G."/>
            <person name="Neves A."/>
            <person name="Pacheco A.B."/>
            <person name="Carvalho D."/>
            <person name="Lery L."/>
            <person name="Bisch P."/>
            <person name="Rossle S.C."/>
            <person name="Urmenyi T."/>
            <person name="Rael Pereira A."/>
            <person name="Silva R."/>
            <person name="Rondinelli E."/>
            <person name="von Kruger W."/>
            <person name="Martins O."/>
            <person name="Baldani J.I."/>
            <person name="Ferreira P.C."/>
        </authorList>
    </citation>
    <scope>NUCLEOTIDE SEQUENCE [LARGE SCALE GENOMIC DNA]</scope>
    <source>
        <strain>ATCC 49037 / DSM 5601 / CCUG 37298 / CIP 103539 / LMG 7603 / PAl5</strain>
    </source>
</reference>
<reference key="2">
    <citation type="journal article" date="2010" name="Stand. Genomic Sci.">
        <title>Two genome sequences of the same bacterial strain, Gluconacetobacter diazotrophicus PAl 5, suggest a new standard in genome sequence submission.</title>
        <authorList>
            <person name="Giongo A."/>
            <person name="Tyler H.L."/>
            <person name="Zipperer U.N."/>
            <person name="Triplett E.W."/>
        </authorList>
    </citation>
    <scope>NUCLEOTIDE SEQUENCE [LARGE SCALE GENOMIC DNA]</scope>
    <source>
        <strain>ATCC 49037 / DSM 5601 / CCUG 37298 / CIP 103539 / LMG 7603 / PAl5</strain>
    </source>
</reference>
<comment type="function">
    <text evidence="1">Responsible for the release of ribosomes from messenger RNA at the termination of protein biosynthesis. May increase the efficiency of translation by recycling ribosomes from one round of translation to another.</text>
</comment>
<comment type="subcellular location">
    <subcellularLocation>
        <location evidence="1">Cytoplasm</location>
    </subcellularLocation>
</comment>
<comment type="similarity">
    <text evidence="1">Belongs to the RRF family.</text>
</comment>
<organism>
    <name type="scientific">Gluconacetobacter diazotrophicus (strain ATCC 49037 / DSM 5601 / CCUG 37298 / CIP 103539 / LMG 7603 / PAl5)</name>
    <dbReference type="NCBI Taxonomy" id="272568"/>
    <lineage>
        <taxon>Bacteria</taxon>
        <taxon>Pseudomonadati</taxon>
        <taxon>Pseudomonadota</taxon>
        <taxon>Alphaproteobacteria</taxon>
        <taxon>Acetobacterales</taxon>
        <taxon>Acetobacteraceae</taxon>
        <taxon>Gluconacetobacter</taxon>
    </lineage>
</organism>
<keyword id="KW-0963">Cytoplasm</keyword>
<keyword id="KW-0648">Protein biosynthesis</keyword>
<keyword id="KW-1185">Reference proteome</keyword>
<proteinExistence type="inferred from homology"/>
<dbReference type="EMBL" id="AM889285">
    <property type="protein sequence ID" value="CAP56093.1"/>
    <property type="molecule type" value="Genomic_DNA"/>
</dbReference>
<dbReference type="EMBL" id="CP001189">
    <property type="protein sequence ID" value="ACI50166.1"/>
    <property type="molecule type" value="Genomic_DNA"/>
</dbReference>
<dbReference type="RefSeq" id="WP_012225960.1">
    <property type="nucleotide sequence ID" value="NC_010125.1"/>
</dbReference>
<dbReference type="SMR" id="A9HKW6"/>
<dbReference type="STRING" id="272568.GDI2150"/>
<dbReference type="KEGG" id="gdi:GDI2150"/>
<dbReference type="KEGG" id="gdj:Gdia_0370"/>
<dbReference type="eggNOG" id="COG0233">
    <property type="taxonomic scope" value="Bacteria"/>
</dbReference>
<dbReference type="HOGENOM" id="CLU_073981_2_0_5"/>
<dbReference type="OrthoDB" id="9804006at2"/>
<dbReference type="Proteomes" id="UP000001176">
    <property type="component" value="Chromosome"/>
</dbReference>
<dbReference type="GO" id="GO:0005829">
    <property type="term" value="C:cytosol"/>
    <property type="evidence" value="ECO:0007669"/>
    <property type="project" value="GOC"/>
</dbReference>
<dbReference type="GO" id="GO:0043023">
    <property type="term" value="F:ribosomal large subunit binding"/>
    <property type="evidence" value="ECO:0007669"/>
    <property type="project" value="TreeGrafter"/>
</dbReference>
<dbReference type="GO" id="GO:0002184">
    <property type="term" value="P:cytoplasmic translational termination"/>
    <property type="evidence" value="ECO:0007669"/>
    <property type="project" value="TreeGrafter"/>
</dbReference>
<dbReference type="CDD" id="cd00520">
    <property type="entry name" value="RRF"/>
    <property type="match status" value="1"/>
</dbReference>
<dbReference type="FunFam" id="1.10.132.20:FF:000001">
    <property type="entry name" value="Ribosome-recycling factor"/>
    <property type="match status" value="1"/>
</dbReference>
<dbReference type="FunFam" id="3.30.1360.40:FF:000001">
    <property type="entry name" value="Ribosome-recycling factor"/>
    <property type="match status" value="1"/>
</dbReference>
<dbReference type="Gene3D" id="3.30.1360.40">
    <property type="match status" value="1"/>
</dbReference>
<dbReference type="Gene3D" id="1.10.132.20">
    <property type="entry name" value="Ribosome-recycling factor"/>
    <property type="match status" value="1"/>
</dbReference>
<dbReference type="HAMAP" id="MF_00040">
    <property type="entry name" value="RRF"/>
    <property type="match status" value="1"/>
</dbReference>
<dbReference type="InterPro" id="IPR002661">
    <property type="entry name" value="Ribosome_recyc_fac"/>
</dbReference>
<dbReference type="InterPro" id="IPR023584">
    <property type="entry name" value="Ribosome_recyc_fac_dom"/>
</dbReference>
<dbReference type="InterPro" id="IPR036191">
    <property type="entry name" value="RRF_sf"/>
</dbReference>
<dbReference type="NCBIfam" id="TIGR00496">
    <property type="entry name" value="frr"/>
    <property type="match status" value="1"/>
</dbReference>
<dbReference type="PANTHER" id="PTHR20982:SF3">
    <property type="entry name" value="MITOCHONDRIAL RIBOSOME RECYCLING FACTOR PSEUDO 1"/>
    <property type="match status" value="1"/>
</dbReference>
<dbReference type="PANTHER" id="PTHR20982">
    <property type="entry name" value="RIBOSOME RECYCLING FACTOR"/>
    <property type="match status" value="1"/>
</dbReference>
<dbReference type="Pfam" id="PF01765">
    <property type="entry name" value="RRF"/>
    <property type="match status" value="1"/>
</dbReference>
<dbReference type="SUPFAM" id="SSF55194">
    <property type="entry name" value="Ribosome recycling factor, RRF"/>
    <property type="match status" value="1"/>
</dbReference>
<accession>A9HKW6</accession>
<accession>B5ZLN7</accession>
<gene>
    <name evidence="1" type="primary">frr</name>
    <name type="ordered locus">GDI2150</name>
    <name type="ordered locus">Gdia_0370</name>
</gene>
<protein>
    <recommendedName>
        <fullName evidence="1">Ribosome-recycling factor</fullName>
        <shortName evidence="1">RRF</shortName>
    </recommendedName>
    <alternativeName>
        <fullName evidence="1">Ribosome-releasing factor</fullName>
    </alternativeName>
</protein>
<feature type="chain" id="PRO_1000074582" description="Ribosome-recycling factor">
    <location>
        <begin position="1"/>
        <end position="188"/>
    </location>
</feature>